<comment type="function">
    <text evidence="2 3">Part of the ABC transporter complex PhnCDE involved in phosphonates, phosphate esters, phosphite and phosphate import. Responsible for energy coupling to the transport system.</text>
</comment>
<comment type="catalytic activity">
    <reaction evidence="1">
        <text>phosphonate(out) + ATP + H2O = phosphonate(in) + ADP + phosphate + H(+)</text>
        <dbReference type="Rhea" id="RHEA:18065"/>
        <dbReference type="ChEBI" id="CHEBI:15377"/>
        <dbReference type="ChEBI" id="CHEBI:15378"/>
        <dbReference type="ChEBI" id="CHEBI:16215"/>
        <dbReference type="ChEBI" id="CHEBI:30616"/>
        <dbReference type="ChEBI" id="CHEBI:43474"/>
        <dbReference type="ChEBI" id="CHEBI:456216"/>
        <dbReference type="EC" id="7.3.2.2"/>
    </reaction>
</comment>
<comment type="subunit">
    <text evidence="1">The complex is composed of two ATP-binding proteins (PhnC), two transmembrane proteins (PhnE) and a solute-binding protein (PhnD).</text>
</comment>
<comment type="subcellular location">
    <subcellularLocation>
        <location evidence="1">Cell inner membrane</location>
        <topology evidence="1">Peripheral membrane protein</topology>
    </subcellularLocation>
</comment>
<comment type="miscellaneous">
    <text>Phosphonates utilization is cryptic in strain K12.</text>
</comment>
<comment type="similarity">
    <text evidence="1">Belongs to the ABC transporter superfamily. Phosphonates importer (TC 3.A.1.9.1) family.</text>
</comment>
<keyword id="KW-0067">ATP-binding</keyword>
<keyword id="KW-0997">Cell inner membrane</keyword>
<keyword id="KW-1003">Cell membrane</keyword>
<keyword id="KW-0472">Membrane</keyword>
<keyword id="KW-0547">Nucleotide-binding</keyword>
<keyword id="KW-0918">Phosphonate transport</keyword>
<keyword id="KW-1185">Reference proteome</keyword>
<keyword id="KW-1278">Translocase</keyword>
<keyword id="KW-0813">Transport</keyword>
<proteinExistence type="inferred from homology"/>
<reference key="1">
    <citation type="journal article" date="1990" name="J. Biol. Chem.">
        <title>Molecular biology of carbon-phosphorus bond cleavage. Cloning and sequencing of the phn (psiD) genes involved in alkylphosphonate uptake and C-P lyase activity in Escherichia coli B.</title>
        <authorList>
            <person name="Chen C.-M."/>
            <person name="Ye Q.-Z."/>
            <person name="Zhu Z."/>
            <person name="Wanner B.L."/>
            <person name="Walsh C.T."/>
        </authorList>
    </citation>
    <scope>NUCLEOTIDE SEQUENCE [GENOMIC DNA]</scope>
    <source>
        <strain>B</strain>
    </source>
</reference>
<reference key="2">
    <citation type="journal article" date="1991" name="J. Bacteriol.">
        <title>Molecular analysis of the cryptic and functional phn operons for phosphonate use in Escherichia coli K-12.</title>
        <authorList>
            <person name="Makino K."/>
            <person name="Kim S.K."/>
            <person name="Shinagawa H."/>
            <person name="Amemura M."/>
            <person name="Nakata A."/>
        </authorList>
    </citation>
    <scope>NUCLEOTIDE SEQUENCE [GENOMIC DNA]</scope>
    <source>
        <strain>K12</strain>
    </source>
</reference>
<reference key="3">
    <citation type="journal article" date="1995" name="Nucleic Acids Res.">
        <title>Analysis of the Escherichia coli genome VI: DNA sequence of the region from 92.8 through 100 minutes.</title>
        <authorList>
            <person name="Burland V.D."/>
            <person name="Plunkett G. III"/>
            <person name="Sofia H.J."/>
            <person name="Daniels D.L."/>
            <person name="Blattner F.R."/>
        </authorList>
    </citation>
    <scope>NUCLEOTIDE SEQUENCE [LARGE SCALE GENOMIC DNA]</scope>
    <source>
        <strain>K12 / MG1655 / ATCC 47076</strain>
    </source>
</reference>
<reference key="4">
    <citation type="journal article" date="1997" name="Science">
        <title>The complete genome sequence of Escherichia coli K-12.</title>
        <authorList>
            <person name="Blattner F.R."/>
            <person name="Plunkett G. III"/>
            <person name="Bloch C.A."/>
            <person name="Perna N.T."/>
            <person name="Burland V."/>
            <person name="Riley M."/>
            <person name="Collado-Vides J."/>
            <person name="Glasner J.D."/>
            <person name="Rode C.K."/>
            <person name="Mayhew G.F."/>
            <person name="Gregor J."/>
            <person name="Davis N.W."/>
            <person name="Kirkpatrick H.A."/>
            <person name="Goeden M.A."/>
            <person name="Rose D.J."/>
            <person name="Mau B."/>
            <person name="Shao Y."/>
        </authorList>
    </citation>
    <scope>NUCLEOTIDE SEQUENCE [LARGE SCALE GENOMIC DNA]</scope>
    <source>
        <strain>K12 / MG1655 / ATCC 47076</strain>
    </source>
</reference>
<reference key="5">
    <citation type="journal article" date="2006" name="Mol. Syst. Biol.">
        <title>Highly accurate genome sequences of Escherichia coli K-12 strains MG1655 and W3110.</title>
        <authorList>
            <person name="Hayashi K."/>
            <person name="Morooka N."/>
            <person name="Yamamoto Y."/>
            <person name="Fujita K."/>
            <person name="Isono K."/>
            <person name="Choi S."/>
            <person name="Ohtsubo E."/>
            <person name="Baba T."/>
            <person name="Wanner B.L."/>
            <person name="Mori H."/>
            <person name="Horiuchi T."/>
        </authorList>
    </citation>
    <scope>NUCLEOTIDE SEQUENCE [LARGE SCALE GENOMIC DNA]</scope>
    <source>
        <strain>K12 / W3110 / ATCC 27325 / DSM 5911</strain>
    </source>
</reference>
<reference key="6">
    <citation type="journal article" date="1991" name="J. Bacteriol.">
        <title>Involvement of the Escherichia coli phn (psiD) gene cluster in assimilation of phosphorus in the form of phosphonates, phosphite, Pi esters, and Pi.</title>
        <authorList>
            <person name="Metcalf W.W."/>
            <person name="Wanner B.L."/>
        </authorList>
    </citation>
    <scope>FUNCTION</scope>
</reference>
<reference key="7">
    <citation type="journal article" date="1993" name="J. Bacteriol.">
        <title>Mutational analysis of an Escherichia coli fourteen-gene operon for phosphonate degradation, using TnphoA' elements.</title>
        <authorList>
            <person name="Metcalf W.W."/>
            <person name="Wanner B.L."/>
        </authorList>
    </citation>
    <scope>FUNCTION</scope>
</reference>
<protein>
    <recommendedName>
        <fullName evidence="1">Phosphonates import ATP-binding protein PhnC</fullName>
        <ecNumber evidence="1">7.3.2.2</ecNumber>
    </recommendedName>
</protein>
<evidence type="ECO:0000255" key="1">
    <source>
        <dbReference type="HAMAP-Rule" id="MF_01713"/>
    </source>
</evidence>
<evidence type="ECO:0000269" key="2">
    <source>
    </source>
</evidence>
<evidence type="ECO:0000269" key="3">
    <source>
    </source>
</evidence>
<organism>
    <name type="scientific">Escherichia coli (strain K12)</name>
    <dbReference type="NCBI Taxonomy" id="83333"/>
    <lineage>
        <taxon>Bacteria</taxon>
        <taxon>Pseudomonadati</taxon>
        <taxon>Pseudomonadota</taxon>
        <taxon>Gammaproteobacteria</taxon>
        <taxon>Enterobacterales</taxon>
        <taxon>Enterobacteriaceae</taxon>
        <taxon>Escherichia</taxon>
    </lineage>
</organism>
<gene>
    <name evidence="1" type="primary">phnC</name>
    <name type="ordered locus">b4106</name>
    <name type="ordered locus">JW4067</name>
</gene>
<feature type="chain" id="PRO_0000092706" description="Phosphonates import ATP-binding protein PhnC">
    <location>
        <begin position="1"/>
        <end position="262"/>
    </location>
</feature>
<feature type="domain" description="ABC transporter" evidence="1">
    <location>
        <begin position="5"/>
        <end position="253"/>
    </location>
</feature>
<feature type="binding site" evidence="1">
    <location>
        <begin position="37"/>
        <end position="44"/>
    </location>
    <ligand>
        <name>ATP</name>
        <dbReference type="ChEBI" id="CHEBI:30616"/>
    </ligand>
</feature>
<feature type="sequence variant" description="In strain: B.">
    <original>V</original>
    <variation>A</variation>
    <location>
        <position position="60"/>
    </location>
</feature>
<feature type="sequence variant" description="In strain: B.">
    <original>H</original>
    <variation>N</variation>
    <location>
        <position position="87"/>
    </location>
</feature>
<feature type="sequence variant" description="In strain: B.">
    <original>G</original>
    <variation>R</variation>
    <location>
        <position position="127"/>
    </location>
</feature>
<feature type="sequence variant" description="In strain: B.">
    <original>V</original>
    <variation>I</variation>
    <location>
        <position position="255"/>
    </location>
</feature>
<name>PHNC_ECOLI</name>
<accession>P16677</accession>
<accession>Q2M6J8</accession>
<dbReference type="EC" id="7.3.2.2" evidence="1"/>
<dbReference type="EMBL" id="J05260">
    <property type="protein sequence ID" value="AAA24339.1"/>
    <property type="molecule type" value="Genomic_DNA"/>
</dbReference>
<dbReference type="EMBL" id="D90227">
    <property type="protein sequence ID" value="BAA14262.1"/>
    <property type="molecule type" value="Genomic_DNA"/>
</dbReference>
<dbReference type="EMBL" id="U14003">
    <property type="protein sequence ID" value="AAA97005.1"/>
    <property type="molecule type" value="Genomic_DNA"/>
</dbReference>
<dbReference type="EMBL" id="U00096">
    <property type="protein sequence ID" value="AAC77067.1"/>
    <property type="molecule type" value="Genomic_DNA"/>
</dbReference>
<dbReference type="EMBL" id="AP009048">
    <property type="protein sequence ID" value="BAE78108.1"/>
    <property type="molecule type" value="Genomic_DNA"/>
</dbReference>
<dbReference type="PIR" id="A65220">
    <property type="entry name" value="A65220"/>
</dbReference>
<dbReference type="RefSeq" id="NP_418530.1">
    <property type="nucleotide sequence ID" value="NC_000913.3"/>
</dbReference>
<dbReference type="RefSeq" id="WP_001193409.1">
    <property type="nucleotide sequence ID" value="NZ_SSZK01000016.1"/>
</dbReference>
<dbReference type="SMR" id="P16677"/>
<dbReference type="BioGRID" id="4263090">
    <property type="interactions" value="1"/>
</dbReference>
<dbReference type="FunCoup" id="P16677">
    <property type="interactions" value="310"/>
</dbReference>
<dbReference type="IntAct" id="P16677">
    <property type="interactions" value="1"/>
</dbReference>
<dbReference type="STRING" id="511145.b4106"/>
<dbReference type="TCDB" id="3.A.1.9.1">
    <property type="family name" value="the atp-binding cassette (abc) superfamily"/>
</dbReference>
<dbReference type="PaxDb" id="511145-b4106"/>
<dbReference type="EnsemblBacteria" id="AAC77067">
    <property type="protein sequence ID" value="AAC77067"/>
    <property type="gene ID" value="b4106"/>
</dbReference>
<dbReference type="GeneID" id="948623"/>
<dbReference type="KEGG" id="ecj:JW4067"/>
<dbReference type="KEGG" id="eco:b4106"/>
<dbReference type="KEGG" id="ecoc:C3026_22185"/>
<dbReference type="PATRIC" id="fig|1411691.4.peg.2594"/>
<dbReference type="EchoBASE" id="EB0707"/>
<dbReference type="eggNOG" id="COG3638">
    <property type="taxonomic scope" value="Bacteria"/>
</dbReference>
<dbReference type="HOGENOM" id="CLU_000604_1_22_6"/>
<dbReference type="InParanoid" id="P16677"/>
<dbReference type="OMA" id="RYCPRAV"/>
<dbReference type="OrthoDB" id="9802264at2"/>
<dbReference type="PhylomeDB" id="P16677"/>
<dbReference type="BioCyc" id="EcoCyc:PHNC-MONOMER"/>
<dbReference type="PRO" id="PR:P16677"/>
<dbReference type="Proteomes" id="UP000000625">
    <property type="component" value="Chromosome"/>
</dbReference>
<dbReference type="GO" id="GO:0005886">
    <property type="term" value="C:plasma membrane"/>
    <property type="evidence" value="ECO:0007669"/>
    <property type="project" value="UniProtKB-SubCell"/>
</dbReference>
<dbReference type="GO" id="GO:0015416">
    <property type="term" value="F:ABC-type phosphonate transporter activity"/>
    <property type="evidence" value="ECO:0007669"/>
    <property type="project" value="UniProtKB-EC"/>
</dbReference>
<dbReference type="GO" id="GO:0005524">
    <property type="term" value="F:ATP binding"/>
    <property type="evidence" value="ECO:0007669"/>
    <property type="project" value="UniProtKB-KW"/>
</dbReference>
<dbReference type="GO" id="GO:0016887">
    <property type="term" value="F:ATP hydrolysis activity"/>
    <property type="evidence" value="ECO:0007669"/>
    <property type="project" value="InterPro"/>
</dbReference>
<dbReference type="CDD" id="cd03256">
    <property type="entry name" value="ABC_PhnC_transporter"/>
    <property type="match status" value="1"/>
</dbReference>
<dbReference type="Gene3D" id="3.40.50.300">
    <property type="entry name" value="P-loop containing nucleotide triphosphate hydrolases"/>
    <property type="match status" value="1"/>
</dbReference>
<dbReference type="InterPro" id="IPR003593">
    <property type="entry name" value="AAA+_ATPase"/>
</dbReference>
<dbReference type="InterPro" id="IPR003439">
    <property type="entry name" value="ABC_transporter-like_ATP-bd"/>
</dbReference>
<dbReference type="InterPro" id="IPR017871">
    <property type="entry name" value="ABC_transporter-like_CS"/>
</dbReference>
<dbReference type="InterPro" id="IPR012693">
    <property type="entry name" value="ABC_transpr_PhnC"/>
</dbReference>
<dbReference type="InterPro" id="IPR050086">
    <property type="entry name" value="MetN_ABC_transporter-like"/>
</dbReference>
<dbReference type="InterPro" id="IPR027417">
    <property type="entry name" value="P-loop_NTPase"/>
</dbReference>
<dbReference type="NCBIfam" id="TIGR02315">
    <property type="entry name" value="ABC_phnC"/>
    <property type="match status" value="1"/>
</dbReference>
<dbReference type="NCBIfam" id="NF007438">
    <property type="entry name" value="PRK09984.1"/>
    <property type="match status" value="1"/>
</dbReference>
<dbReference type="PANTHER" id="PTHR43166">
    <property type="entry name" value="AMINO ACID IMPORT ATP-BINDING PROTEIN"/>
    <property type="match status" value="1"/>
</dbReference>
<dbReference type="PANTHER" id="PTHR43166:SF6">
    <property type="entry name" value="PHOSPHONATES IMPORT ATP-BINDING PROTEIN PHNC"/>
    <property type="match status" value="1"/>
</dbReference>
<dbReference type="Pfam" id="PF00005">
    <property type="entry name" value="ABC_tran"/>
    <property type="match status" value="1"/>
</dbReference>
<dbReference type="SMART" id="SM00382">
    <property type="entry name" value="AAA"/>
    <property type="match status" value="1"/>
</dbReference>
<dbReference type="SUPFAM" id="SSF52540">
    <property type="entry name" value="P-loop containing nucleoside triphosphate hydrolases"/>
    <property type="match status" value="1"/>
</dbReference>
<dbReference type="PROSITE" id="PS00211">
    <property type="entry name" value="ABC_TRANSPORTER_1"/>
    <property type="match status" value="1"/>
</dbReference>
<dbReference type="PROSITE" id="PS50893">
    <property type="entry name" value="ABC_TRANSPORTER_2"/>
    <property type="match status" value="1"/>
</dbReference>
<dbReference type="PROSITE" id="PS51249">
    <property type="entry name" value="PHNC"/>
    <property type="match status" value="1"/>
</dbReference>
<sequence>MQTIIRVEKLAKTFNQHQALHAVDLNIHHGEMVALLGPSGSGKSTLLRHLSGLITGDKSVGSHIELLGRTVQREGRLARDIRKSRAHTGYIFQQFNLVNRLSVLENVLIGALGSTPFWRTCFSWFTGEQKQRALQALTRVGMVHFAHQRVSTLSGGQQQRVAIARALMQQAKVILADEPIASLDPESARIVMDTLRDINQNDGITVVVTLHQVDYALRYCERIVALRQGHVFYDGSSQQFDNERFDHLYRSINRVEENAKAA</sequence>